<evidence type="ECO:0000255" key="1">
    <source>
        <dbReference type="HAMAP-Rule" id="MF_01342"/>
    </source>
</evidence>
<evidence type="ECO:0000305" key="2"/>
<feature type="chain" id="PRO_1000067676" description="Large ribosomal subunit protein uL16">
    <location>
        <begin position="1"/>
        <end position="136"/>
    </location>
</feature>
<reference key="1">
    <citation type="journal article" date="2008" name="J. Bacteriol.">
        <title>The pangenome structure of Escherichia coli: comparative genomic analysis of E. coli commensal and pathogenic isolates.</title>
        <authorList>
            <person name="Rasko D.A."/>
            <person name="Rosovitz M.J."/>
            <person name="Myers G.S.A."/>
            <person name="Mongodin E.F."/>
            <person name="Fricke W.F."/>
            <person name="Gajer P."/>
            <person name="Crabtree J."/>
            <person name="Sebaihia M."/>
            <person name="Thomson N.R."/>
            <person name="Chaudhuri R."/>
            <person name="Henderson I.R."/>
            <person name="Sperandio V."/>
            <person name="Ravel J."/>
        </authorList>
    </citation>
    <scope>NUCLEOTIDE SEQUENCE [LARGE SCALE GENOMIC DNA]</scope>
    <source>
        <strain>E24377A / ETEC</strain>
    </source>
</reference>
<protein>
    <recommendedName>
        <fullName evidence="1">Large ribosomal subunit protein uL16</fullName>
    </recommendedName>
    <alternativeName>
        <fullName evidence="2">50S ribosomal protein L16</fullName>
    </alternativeName>
</protein>
<accession>A7ZSK2</accession>
<gene>
    <name evidence="1" type="primary">rplP</name>
    <name type="ordered locus">EcE24377A_3796</name>
</gene>
<dbReference type="EMBL" id="CP000800">
    <property type="protein sequence ID" value="ABV19299.1"/>
    <property type="molecule type" value="Genomic_DNA"/>
</dbReference>
<dbReference type="RefSeq" id="WP_000941212.1">
    <property type="nucleotide sequence ID" value="NC_009801.1"/>
</dbReference>
<dbReference type="SMR" id="A7ZSK2"/>
<dbReference type="GeneID" id="93778674"/>
<dbReference type="KEGG" id="ecw:EcE24377A_3796"/>
<dbReference type="HOGENOM" id="CLU_078858_2_1_6"/>
<dbReference type="Proteomes" id="UP000001122">
    <property type="component" value="Chromosome"/>
</dbReference>
<dbReference type="GO" id="GO:0022625">
    <property type="term" value="C:cytosolic large ribosomal subunit"/>
    <property type="evidence" value="ECO:0007669"/>
    <property type="project" value="TreeGrafter"/>
</dbReference>
<dbReference type="GO" id="GO:0019843">
    <property type="term" value="F:rRNA binding"/>
    <property type="evidence" value="ECO:0007669"/>
    <property type="project" value="UniProtKB-UniRule"/>
</dbReference>
<dbReference type="GO" id="GO:0003735">
    <property type="term" value="F:structural constituent of ribosome"/>
    <property type="evidence" value="ECO:0007669"/>
    <property type="project" value="InterPro"/>
</dbReference>
<dbReference type="GO" id="GO:0000049">
    <property type="term" value="F:tRNA binding"/>
    <property type="evidence" value="ECO:0007669"/>
    <property type="project" value="UniProtKB-KW"/>
</dbReference>
<dbReference type="GO" id="GO:0006412">
    <property type="term" value="P:translation"/>
    <property type="evidence" value="ECO:0007669"/>
    <property type="project" value="UniProtKB-UniRule"/>
</dbReference>
<dbReference type="CDD" id="cd01433">
    <property type="entry name" value="Ribosomal_L16_L10e"/>
    <property type="match status" value="1"/>
</dbReference>
<dbReference type="FunFam" id="3.90.1170.10:FF:000001">
    <property type="entry name" value="50S ribosomal protein L16"/>
    <property type="match status" value="1"/>
</dbReference>
<dbReference type="Gene3D" id="3.90.1170.10">
    <property type="entry name" value="Ribosomal protein L10e/L16"/>
    <property type="match status" value="1"/>
</dbReference>
<dbReference type="HAMAP" id="MF_01342">
    <property type="entry name" value="Ribosomal_uL16"/>
    <property type="match status" value="1"/>
</dbReference>
<dbReference type="InterPro" id="IPR047873">
    <property type="entry name" value="Ribosomal_uL16"/>
</dbReference>
<dbReference type="InterPro" id="IPR000114">
    <property type="entry name" value="Ribosomal_uL16_bact-type"/>
</dbReference>
<dbReference type="InterPro" id="IPR020798">
    <property type="entry name" value="Ribosomal_uL16_CS"/>
</dbReference>
<dbReference type="InterPro" id="IPR016180">
    <property type="entry name" value="Ribosomal_uL16_dom"/>
</dbReference>
<dbReference type="InterPro" id="IPR036920">
    <property type="entry name" value="Ribosomal_uL16_sf"/>
</dbReference>
<dbReference type="NCBIfam" id="TIGR01164">
    <property type="entry name" value="rplP_bact"/>
    <property type="match status" value="1"/>
</dbReference>
<dbReference type="PANTHER" id="PTHR12220">
    <property type="entry name" value="50S/60S RIBOSOMAL PROTEIN L16"/>
    <property type="match status" value="1"/>
</dbReference>
<dbReference type="PANTHER" id="PTHR12220:SF13">
    <property type="entry name" value="LARGE RIBOSOMAL SUBUNIT PROTEIN UL16M"/>
    <property type="match status" value="1"/>
</dbReference>
<dbReference type="Pfam" id="PF00252">
    <property type="entry name" value="Ribosomal_L16"/>
    <property type="match status" value="1"/>
</dbReference>
<dbReference type="PRINTS" id="PR00060">
    <property type="entry name" value="RIBOSOMALL16"/>
</dbReference>
<dbReference type="SUPFAM" id="SSF54686">
    <property type="entry name" value="Ribosomal protein L16p/L10e"/>
    <property type="match status" value="1"/>
</dbReference>
<dbReference type="PROSITE" id="PS00586">
    <property type="entry name" value="RIBOSOMAL_L16_1"/>
    <property type="match status" value="1"/>
</dbReference>
<dbReference type="PROSITE" id="PS00701">
    <property type="entry name" value="RIBOSOMAL_L16_2"/>
    <property type="match status" value="1"/>
</dbReference>
<sequence>MLQPKRTKFRKMHKGRNRGLAQGTDVSFGSFGLKAVGRGRLTARQIEAARRAMTRAVKRQGKIWIRVFPDKPITEKPLAVRMGKGKGNVEYWVALIQPGKVLYEMDGVPEELAREAFKLAAAKLPIKTTFVTKTVM</sequence>
<proteinExistence type="inferred from homology"/>
<comment type="function">
    <text evidence="1">Binds 23S rRNA and is also seen to make contacts with the A and possibly P site tRNAs.</text>
</comment>
<comment type="subunit">
    <text evidence="1">Part of the 50S ribosomal subunit.</text>
</comment>
<comment type="similarity">
    <text evidence="1">Belongs to the universal ribosomal protein uL16 family.</text>
</comment>
<name>RL16_ECO24</name>
<organism>
    <name type="scientific">Escherichia coli O139:H28 (strain E24377A / ETEC)</name>
    <dbReference type="NCBI Taxonomy" id="331111"/>
    <lineage>
        <taxon>Bacteria</taxon>
        <taxon>Pseudomonadati</taxon>
        <taxon>Pseudomonadota</taxon>
        <taxon>Gammaproteobacteria</taxon>
        <taxon>Enterobacterales</taxon>
        <taxon>Enterobacteriaceae</taxon>
        <taxon>Escherichia</taxon>
    </lineage>
</organism>
<keyword id="KW-1185">Reference proteome</keyword>
<keyword id="KW-0687">Ribonucleoprotein</keyword>
<keyword id="KW-0689">Ribosomal protein</keyword>
<keyword id="KW-0694">RNA-binding</keyword>
<keyword id="KW-0699">rRNA-binding</keyword>
<keyword id="KW-0820">tRNA-binding</keyword>